<keyword id="KW-0963">Cytoplasm</keyword>
<keyword id="KW-0489">Methyltransferase</keyword>
<keyword id="KW-0545">Nucleotide biosynthesis</keyword>
<keyword id="KW-1185">Reference proteome</keyword>
<keyword id="KW-0808">Transferase</keyword>
<gene>
    <name evidence="1" type="primary">thyA</name>
    <name type="ordered locus">Noca_2311</name>
</gene>
<dbReference type="EC" id="2.1.1.45" evidence="1"/>
<dbReference type="EMBL" id="CP000509">
    <property type="protein sequence ID" value="ABL81816.1"/>
    <property type="molecule type" value="Genomic_DNA"/>
</dbReference>
<dbReference type="RefSeq" id="WP_011755758.1">
    <property type="nucleotide sequence ID" value="NC_008699.1"/>
</dbReference>
<dbReference type="SMR" id="A1SJ31"/>
<dbReference type="STRING" id="196162.Noca_2311"/>
<dbReference type="KEGG" id="nca:Noca_2311"/>
<dbReference type="eggNOG" id="COG0207">
    <property type="taxonomic scope" value="Bacteria"/>
</dbReference>
<dbReference type="HOGENOM" id="CLU_021669_0_0_11"/>
<dbReference type="OrthoDB" id="9774633at2"/>
<dbReference type="UniPathway" id="UPA00575"/>
<dbReference type="Proteomes" id="UP000000640">
    <property type="component" value="Chromosome"/>
</dbReference>
<dbReference type="GO" id="GO:0005829">
    <property type="term" value="C:cytosol"/>
    <property type="evidence" value="ECO:0007669"/>
    <property type="project" value="TreeGrafter"/>
</dbReference>
<dbReference type="GO" id="GO:0004799">
    <property type="term" value="F:thymidylate synthase activity"/>
    <property type="evidence" value="ECO:0007669"/>
    <property type="project" value="UniProtKB-UniRule"/>
</dbReference>
<dbReference type="GO" id="GO:0006231">
    <property type="term" value="P:dTMP biosynthetic process"/>
    <property type="evidence" value="ECO:0007669"/>
    <property type="project" value="UniProtKB-UniRule"/>
</dbReference>
<dbReference type="GO" id="GO:0006235">
    <property type="term" value="P:dTTP biosynthetic process"/>
    <property type="evidence" value="ECO:0007669"/>
    <property type="project" value="UniProtKB-UniRule"/>
</dbReference>
<dbReference type="GO" id="GO:0032259">
    <property type="term" value="P:methylation"/>
    <property type="evidence" value="ECO:0007669"/>
    <property type="project" value="UniProtKB-KW"/>
</dbReference>
<dbReference type="CDD" id="cd00351">
    <property type="entry name" value="TS_Pyrimidine_HMase"/>
    <property type="match status" value="1"/>
</dbReference>
<dbReference type="FunFam" id="3.30.572.10:FF:000013">
    <property type="entry name" value="Thymidylate synthase"/>
    <property type="match status" value="1"/>
</dbReference>
<dbReference type="Gene3D" id="3.30.572.10">
    <property type="entry name" value="Thymidylate synthase/dCMP hydroxymethylase domain"/>
    <property type="match status" value="1"/>
</dbReference>
<dbReference type="HAMAP" id="MF_00008">
    <property type="entry name" value="Thymidy_synth_bact"/>
    <property type="match status" value="1"/>
</dbReference>
<dbReference type="InterPro" id="IPR045097">
    <property type="entry name" value="Thymidate_synth/dCMP_Mease"/>
</dbReference>
<dbReference type="InterPro" id="IPR023451">
    <property type="entry name" value="Thymidate_synth/dCMP_Mease_dom"/>
</dbReference>
<dbReference type="InterPro" id="IPR036926">
    <property type="entry name" value="Thymidate_synth/dCMP_Mease_sf"/>
</dbReference>
<dbReference type="InterPro" id="IPR000398">
    <property type="entry name" value="Thymidylate_synthase"/>
</dbReference>
<dbReference type="InterPro" id="IPR020940">
    <property type="entry name" value="Thymidylate_synthase_AS"/>
</dbReference>
<dbReference type="NCBIfam" id="NF002497">
    <property type="entry name" value="PRK01827.1-3"/>
    <property type="match status" value="1"/>
</dbReference>
<dbReference type="NCBIfam" id="NF002499">
    <property type="entry name" value="PRK01827.1-5"/>
    <property type="match status" value="1"/>
</dbReference>
<dbReference type="NCBIfam" id="TIGR03284">
    <property type="entry name" value="thym_sym"/>
    <property type="match status" value="2"/>
</dbReference>
<dbReference type="PANTHER" id="PTHR11548:SF9">
    <property type="entry name" value="THYMIDYLATE SYNTHASE"/>
    <property type="match status" value="1"/>
</dbReference>
<dbReference type="PANTHER" id="PTHR11548">
    <property type="entry name" value="THYMIDYLATE SYNTHASE 1"/>
    <property type="match status" value="1"/>
</dbReference>
<dbReference type="Pfam" id="PF00303">
    <property type="entry name" value="Thymidylat_synt"/>
    <property type="match status" value="1"/>
</dbReference>
<dbReference type="PRINTS" id="PR00108">
    <property type="entry name" value="THYMDSNTHASE"/>
</dbReference>
<dbReference type="SUPFAM" id="SSF55831">
    <property type="entry name" value="Thymidylate synthase/dCMP hydroxymethylase"/>
    <property type="match status" value="1"/>
</dbReference>
<dbReference type="PROSITE" id="PS00091">
    <property type="entry name" value="THYMIDYLATE_SYNTHASE"/>
    <property type="match status" value="1"/>
</dbReference>
<evidence type="ECO:0000255" key="1">
    <source>
        <dbReference type="HAMAP-Rule" id="MF_00008"/>
    </source>
</evidence>
<sequence>MRAYLDLLQRVVDEGVPKGDRTGTGTLSVFGHQMRFDLRAGFPLVTTKKVHTRSVFGELLWFLRGDTNVKWLQDRGITIWDEWADEQGDLGPVYGYQWRSWPTPDGRHVDQIAQVVEQIRDSPDSRRHVVSAWNVADIPDMALAPCHTMFQFYVAPPGPGEESGPGRLSCQLYQRSADVFLGVPFNIASYALLTHMVAQVTGLEVGDFVHTLGDAHLYSNHLDQARLQLTREPRPLPRLVLDSSVTELDAFDLEHIAVEGYDPHPGIKAPIAV</sequence>
<protein>
    <recommendedName>
        <fullName evidence="1">Thymidylate synthase</fullName>
        <shortName evidence="1">TS</shortName>
        <shortName evidence="1">TSase</shortName>
        <ecNumber evidence="1">2.1.1.45</ecNumber>
    </recommendedName>
</protein>
<feature type="chain" id="PRO_1000000643" description="Thymidylate synthase">
    <location>
        <begin position="1"/>
        <end position="273"/>
    </location>
</feature>
<feature type="active site" description="Nucleophile" evidence="1">
    <location>
        <position position="146"/>
    </location>
</feature>
<feature type="binding site" description="in other chain" evidence="1">
    <location>
        <position position="21"/>
    </location>
    <ligand>
        <name>dUMP</name>
        <dbReference type="ChEBI" id="CHEBI:246422"/>
        <note>ligand shared between dimeric partners</note>
    </ligand>
</feature>
<feature type="binding site" evidence="1">
    <location>
        <position position="51"/>
    </location>
    <ligand>
        <name>(6R)-5,10-methylene-5,6,7,8-tetrahydrofolate</name>
        <dbReference type="ChEBI" id="CHEBI:15636"/>
    </ligand>
</feature>
<feature type="binding site" evidence="1">
    <location>
        <begin position="126"/>
        <end position="127"/>
    </location>
    <ligand>
        <name>dUMP</name>
        <dbReference type="ChEBI" id="CHEBI:246422"/>
        <note>ligand shared between dimeric partners</note>
    </ligand>
</feature>
<feature type="binding site" description="in other chain" evidence="1">
    <location>
        <begin position="175"/>
        <end position="178"/>
    </location>
    <ligand>
        <name>dUMP</name>
        <dbReference type="ChEBI" id="CHEBI:246422"/>
        <note>ligand shared between dimeric partners</note>
    </ligand>
</feature>
<feature type="binding site" evidence="1">
    <location>
        <position position="178"/>
    </location>
    <ligand>
        <name>(6R)-5,10-methylene-5,6,7,8-tetrahydrofolate</name>
        <dbReference type="ChEBI" id="CHEBI:15636"/>
    </ligand>
</feature>
<feature type="binding site" description="in other chain" evidence="1">
    <location>
        <position position="186"/>
    </location>
    <ligand>
        <name>dUMP</name>
        <dbReference type="ChEBI" id="CHEBI:246422"/>
        <note>ligand shared between dimeric partners</note>
    </ligand>
</feature>
<feature type="binding site" description="in other chain" evidence="1">
    <location>
        <begin position="216"/>
        <end position="218"/>
    </location>
    <ligand>
        <name>dUMP</name>
        <dbReference type="ChEBI" id="CHEBI:246422"/>
        <note>ligand shared between dimeric partners</note>
    </ligand>
</feature>
<feature type="binding site" evidence="1">
    <location>
        <position position="272"/>
    </location>
    <ligand>
        <name>(6R)-5,10-methylene-5,6,7,8-tetrahydrofolate</name>
        <dbReference type="ChEBI" id="CHEBI:15636"/>
    </ligand>
</feature>
<name>TYSY_NOCSJ</name>
<comment type="function">
    <text evidence="1">Catalyzes the reductive methylation of 2'-deoxyuridine-5'-monophosphate (dUMP) to 2'-deoxythymidine-5'-monophosphate (dTMP) while utilizing 5,10-methylenetetrahydrofolate (mTHF) as the methyl donor and reductant in the reaction, yielding dihydrofolate (DHF) as a by-product. This enzymatic reaction provides an intracellular de novo source of dTMP, an essential precursor for DNA biosynthesis.</text>
</comment>
<comment type="catalytic activity">
    <reaction evidence="1">
        <text>dUMP + (6R)-5,10-methylene-5,6,7,8-tetrahydrofolate = 7,8-dihydrofolate + dTMP</text>
        <dbReference type="Rhea" id="RHEA:12104"/>
        <dbReference type="ChEBI" id="CHEBI:15636"/>
        <dbReference type="ChEBI" id="CHEBI:57451"/>
        <dbReference type="ChEBI" id="CHEBI:63528"/>
        <dbReference type="ChEBI" id="CHEBI:246422"/>
        <dbReference type="EC" id="2.1.1.45"/>
    </reaction>
</comment>
<comment type="pathway">
    <text evidence="1">Pyrimidine metabolism; dTTP biosynthesis.</text>
</comment>
<comment type="subunit">
    <text evidence="1">Homodimer.</text>
</comment>
<comment type="subcellular location">
    <subcellularLocation>
        <location evidence="1">Cytoplasm</location>
    </subcellularLocation>
</comment>
<comment type="similarity">
    <text evidence="1">Belongs to the thymidylate synthase family. Bacterial-type ThyA subfamily.</text>
</comment>
<reference key="1">
    <citation type="submission" date="2006-12" db="EMBL/GenBank/DDBJ databases">
        <title>Complete sequence of chromosome 1 of Nocardioides sp. JS614.</title>
        <authorList>
            <person name="Copeland A."/>
            <person name="Lucas S."/>
            <person name="Lapidus A."/>
            <person name="Barry K."/>
            <person name="Detter J.C."/>
            <person name="Glavina del Rio T."/>
            <person name="Hammon N."/>
            <person name="Israni S."/>
            <person name="Dalin E."/>
            <person name="Tice H."/>
            <person name="Pitluck S."/>
            <person name="Thompson L.S."/>
            <person name="Brettin T."/>
            <person name="Bruce D."/>
            <person name="Han C."/>
            <person name="Tapia R."/>
            <person name="Schmutz J."/>
            <person name="Larimer F."/>
            <person name="Land M."/>
            <person name="Hauser L."/>
            <person name="Kyrpides N."/>
            <person name="Kim E."/>
            <person name="Mattes T."/>
            <person name="Gossett J."/>
            <person name="Richardson P."/>
        </authorList>
    </citation>
    <scope>NUCLEOTIDE SEQUENCE [LARGE SCALE GENOMIC DNA]</scope>
    <source>
        <strain>ATCC BAA-499 / JS614</strain>
    </source>
</reference>
<accession>A1SJ31</accession>
<proteinExistence type="inferred from homology"/>
<organism>
    <name type="scientific">Nocardioides sp. (strain ATCC BAA-499 / JS614)</name>
    <dbReference type="NCBI Taxonomy" id="196162"/>
    <lineage>
        <taxon>Bacteria</taxon>
        <taxon>Bacillati</taxon>
        <taxon>Actinomycetota</taxon>
        <taxon>Actinomycetes</taxon>
        <taxon>Propionibacteriales</taxon>
        <taxon>Nocardioidaceae</taxon>
        <taxon>Nocardioides</taxon>
    </lineage>
</organism>